<evidence type="ECO:0000255" key="1">
    <source>
        <dbReference type="HAMAP-Rule" id="MF_00046"/>
    </source>
</evidence>
<proteinExistence type="inferred from homology"/>
<dbReference type="EC" id="6.3.2.8" evidence="1"/>
<dbReference type="EMBL" id="CP000471">
    <property type="protein sequence ID" value="ABK43273.1"/>
    <property type="molecule type" value="Genomic_DNA"/>
</dbReference>
<dbReference type="RefSeq" id="WP_011712433.1">
    <property type="nucleotide sequence ID" value="NC_008576.1"/>
</dbReference>
<dbReference type="SMR" id="A0L5N0"/>
<dbReference type="STRING" id="156889.Mmc1_0752"/>
<dbReference type="KEGG" id="mgm:Mmc1_0752"/>
<dbReference type="eggNOG" id="COG0773">
    <property type="taxonomic scope" value="Bacteria"/>
</dbReference>
<dbReference type="HOGENOM" id="CLU_028104_2_2_5"/>
<dbReference type="OrthoDB" id="9804126at2"/>
<dbReference type="UniPathway" id="UPA00219"/>
<dbReference type="Proteomes" id="UP000002586">
    <property type="component" value="Chromosome"/>
</dbReference>
<dbReference type="GO" id="GO:0005737">
    <property type="term" value="C:cytoplasm"/>
    <property type="evidence" value="ECO:0007669"/>
    <property type="project" value="UniProtKB-SubCell"/>
</dbReference>
<dbReference type="GO" id="GO:0005524">
    <property type="term" value="F:ATP binding"/>
    <property type="evidence" value="ECO:0007669"/>
    <property type="project" value="UniProtKB-UniRule"/>
</dbReference>
<dbReference type="GO" id="GO:0008763">
    <property type="term" value="F:UDP-N-acetylmuramate-L-alanine ligase activity"/>
    <property type="evidence" value="ECO:0007669"/>
    <property type="project" value="UniProtKB-UniRule"/>
</dbReference>
<dbReference type="GO" id="GO:0051301">
    <property type="term" value="P:cell division"/>
    <property type="evidence" value="ECO:0007669"/>
    <property type="project" value="UniProtKB-KW"/>
</dbReference>
<dbReference type="GO" id="GO:0071555">
    <property type="term" value="P:cell wall organization"/>
    <property type="evidence" value="ECO:0007669"/>
    <property type="project" value="UniProtKB-KW"/>
</dbReference>
<dbReference type="GO" id="GO:0009252">
    <property type="term" value="P:peptidoglycan biosynthetic process"/>
    <property type="evidence" value="ECO:0007669"/>
    <property type="project" value="UniProtKB-UniRule"/>
</dbReference>
<dbReference type="GO" id="GO:0008360">
    <property type="term" value="P:regulation of cell shape"/>
    <property type="evidence" value="ECO:0007669"/>
    <property type="project" value="UniProtKB-KW"/>
</dbReference>
<dbReference type="Gene3D" id="3.90.190.20">
    <property type="entry name" value="Mur ligase, C-terminal domain"/>
    <property type="match status" value="1"/>
</dbReference>
<dbReference type="Gene3D" id="3.40.1190.10">
    <property type="entry name" value="Mur-like, catalytic domain"/>
    <property type="match status" value="1"/>
</dbReference>
<dbReference type="Gene3D" id="3.40.50.720">
    <property type="entry name" value="NAD(P)-binding Rossmann-like Domain"/>
    <property type="match status" value="1"/>
</dbReference>
<dbReference type="HAMAP" id="MF_00046">
    <property type="entry name" value="MurC"/>
    <property type="match status" value="1"/>
</dbReference>
<dbReference type="InterPro" id="IPR036565">
    <property type="entry name" value="Mur-like_cat_sf"/>
</dbReference>
<dbReference type="InterPro" id="IPR004101">
    <property type="entry name" value="Mur_ligase_C"/>
</dbReference>
<dbReference type="InterPro" id="IPR036615">
    <property type="entry name" value="Mur_ligase_C_dom_sf"/>
</dbReference>
<dbReference type="InterPro" id="IPR013221">
    <property type="entry name" value="Mur_ligase_cen"/>
</dbReference>
<dbReference type="InterPro" id="IPR000713">
    <property type="entry name" value="Mur_ligase_N"/>
</dbReference>
<dbReference type="InterPro" id="IPR050061">
    <property type="entry name" value="MurCDEF_pg_biosynth"/>
</dbReference>
<dbReference type="InterPro" id="IPR005758">
    <property type="entry name" value="UDP-N-AcMur_Ala_ligase_MurC"/>
</dbReference>
<dbReference type="NCBIfam" id="TIGR01082">
    <property type="entry name" value="murC"/>
    <property type="match status" value="1"/>
</dbReference>
<dbReference type="PANTHER" id="PTHR43445:SF3">
    <property type="entry name" value="UDP-N-ACETYLMURAMATE--L-ALANINE LIGASE"/>
    <property type="match status" value="1"/>
</dbReference>
<dbReference type="PANTHER" id="PTHR43445">
    <property type="entry name" value="UDP-N-ACETYLMURAMATE--L-ALANINE LIGASE-RELATED"/>
    <property type="match status" value="1"/>
</dbReference>
<dbReference type="Pfam" id="PF01225">
    <property type="entry name" value="Mur_ligase"/>
    <property type="match status" value="1"/>
</dbReference>
<dbReference type="Pfam" id="PF02875">
    <property type="entry name" value="Mur_ligase_C"/>
    <property type="match status" value="1"/>
</dbReference>
<dbReference type="Pfam" id="PF08245">
    <property type="entry name" value="Mur_ligase_M"/>
    <property type="match status" value="1"/>
</dbReference>
<dbReference type="SUPFAM" id="SSF51984">
    <property type="entry name" value="MurCD N-terminal domain"/>
    <property type="match status" value="1"/>
</dbReference>
<dbReference type="SUPFAM" id="SSF53623">
    <property type="entry name" value="MurD-like peptide ligases, catalytic domain"/>
    <property type="match status" value="1"/>
</dbReference>
<dbReference type="SUPFAM" id="SSF53244">
    <property type="entry name" value="MurD-like peptide ligases, peptide-binding domain"/>
    <property type="match status" value="1"/>
</dbReference>
<comment type="function">
    <text evidence="1">Cell wall formation.</text>
</comment>
<comment type="catalytic activity">
    <reaction evidence="1">
        <text>UDP-N-acetyl-alpha-D-muramate + L-alanine + ATP = UDP-N-acetyl-alpha-D-muramoyl-L-alanine + ADP + phosphate + H(+)</text>
        <dbReference type="Rhea" id="RHEA:23372"/>
        <dbReference type="ChEBI" id="CHEBI:15378"/>
        <dbReference type="ChEBI" id="CHEBI:30616"/>
        <dbReference type="ChEBI" id="CHEBI:43474"/>
        <dbReference type="ChEBI" id="CHEBI:57972"/>
        <dbReference type="ChEBI" id="CHEBI:70757"/>
        <dbReference type="ChEBI" id="CHEBI:83898"/>
        <dbReference type="ChEBI" id="CHEBI:456216"/>
        <dbReference type="EC" id="6.3.2.8"/>
    </reaction>
</comment>
<comment type="pathway">
    <text evidence="1">Cell wall biogenesis; peptidoglycan biosynthesis.</text>
</comment>
<comment type="subcellular location">
    <subcellularLocation>
        <location evidence="1">Cytoplasm</location>
    </subcellularLocation>
</comment>
<comment type="similarity">
    <text evidence="1">Belongs to the MurCDEF family.</text>
</comment>
<name>MURC_MAGMM</name>
<feature type="chain" id="PRO_1000004366" description="UDP-N-acetylmuramate--L-alanine ligase">
    <location>
        <begin position="1"/>
        <end position="476"/>
    </location>
</feature>
<feature type="binding site" evidence="1">
    <location>
        <begin position="112"/>
        <end position="118"/>
    </location>
    <ligand>
        <name>ATP</name>
        <dbReference type="ChEBI" id="CHEBI:30616"/>
    </ligand>
</feature>
<keyword id="KW-0067">ATP-binding</keyword>
<keyword id="KW-0131">Cell cycle</keyword>
<keyword id="KW-0132">Cell division</keyword>
<keyword id="KW-0133">Cell shape</keyword>
<keyword id="KW-0961">Cell wall biogenesis/degradation</keyword>
<keyword id="KW-0963">Cytoplasm</keyword>
<keyword id="KW-0436">Ligase</keyword>
<keyword id="KW-0547">Nucleotide-binding</keyword>
<keyword id="KW-0573">Peptidoglycan synthesis</keyword>
<keyword id="KW-1185">Reference proteome</keyword>
<protein>
    <recommendedName>
        <fullName evidence="1">UDP-N-acetylmuramate--L-alanine ligase</fullName>
        <ecNumber evidence="1">6.3.2.8</ecNumber>
    </recommendedName>
    <alternativeName>
        <fullName evidence="1">UDP-N-acetylmuramoyl-L-alanine synthetase</fullName>
    </alternativeName>
</protein>
<reference key="1">
    <citation type="journal article" date="2009" name="Appl. Environ. Microbiol.">
        <title>Complete genome sequence of the chemolithoautotrophic marine magnetotactic coccus strain MC-1.</title>
        <authorList>
            <person name="Schubbe S."/>
            <person name="Williams T.J."/>
            <person name="Xie G."/>
            <person name="Kiss H.E."/>
            <person name="Brettin T.S."/>
            <person name="Martinez D."/>
            <person name="Ross C.A."/>
            <person name="Schuler D."/>
            <person name="Cox B.L."/>
            <person name="Nealson K.H."/>
            <person name="Bazylinski D.A."/>
        </authorList>
    </citation>
    <scope>NUCLEOTIDE SEQUENCE [LARGE SCALE GENOMIC DNA]</scope>
    <source>
        <strain>ATCC BAA-1437 / JCM 17883 / MC-1</strain>
    </source>
</reference>
<gene>
    <name evidence="1" type="primary">murC</name>
    <name type="ordered locus">Mmc1_0752</name>
</gene>
<accession>A0L5N0</accession>
<sequence>MYPKIQHIHFVGIGGIGMSGIAEVLLTLGYRVSGSDLSENANIKRLRDKGAHIQQGHTAQAIEGADAVVTSSAVKRDNPEVMAARALRIPVVPRAEMLAELMRLKYGIAIAGTHGKTTTTSLVAALLGAADMDPTVVNGGIVKSLGSNAHVGQGAFLVTEADESDGSFLKLSPTIAVVTNMDPEHMNHYGTFDAVREAFRGFVSKIPFYGLAVLCGDHPEVSLLAEEMLDKRVITYGLSDQVDLQAVHIRQEGIVTHFEVIQHDRHHGRESRSLGTIQLNMPGCHNVSNTLAALAVAMELAVPWERCVRALAGFGGVQRRFDLLHQEAAITIIDDYAHHPVEIAATMEAVRNGYPQQRVVAVFQPHRYSRVLDHMHDFCRCFKNADVVLVDEIYRAGEQPPEGPLGEQGAIVLVEGIRRHSSAQVALLADDARWGLDLGGQLKPNDVVVFLGAGDISRRAHSFAAGWSQQTDPKTV</sequence>
<organism>
    <name type="scientific">Magnetococcus marinus (strain ATCC BAA-1437 / JCM 17883 / MC-1)</name>
    <dbReference type="NCBI Taxonomy" id="156889"/>
    <lineage>
        <taxon>Bacteria</taxon>
        <taxon>Pseudomonadati</taxon>
        <taxon>Pseudomonadota</taxon>
        <taxon>Alphaproteobacteria</taxon>
        <taxon>Magnetococcales</taxon>
        <taxon>Magnetococcaceae</taxon>
        <taxon>Magnetococcus</taxon>
    </lineage>
</organism>